<dbReference type="EC" id="4.1.3.17"/>
<dbReference type="EC" id="4.1.1.112"/>
<dbReference type="EMBL" id="AB005242">
    <property type="protein sequence ID" value="BAB09612.1"/>
    <property type="molecule type" value="Genomic_DNA"/>
</dbReference>
<dbReference type="EMBL" id="CP002688">
    <property type="protein sequence ID" value="AED92293.1"/>
    <property type="molecule type" value="Genomic_DNA"/>
</dbReference>
<dbReference type="EMBL" id="CP002688">
    <property type="protein sequence ID" value="AED92294.1"/>
    <property type="molecule type" value="Genomic_DNA"/>
</dbReference>
<dbReference type="EMBL" id="AK118745">
    <property type="protein sequence ID" value="BAC43338.1"/>
    <property type="molecule type" value="mRNA"/>
</dbReference>
<dbReference type="EMBL" id="BT005566">
    <property type="protein sequence ID" value="AAO63986.1"/>
    <property type="molecule type" value="mRNA"/>
</dbReference>
<dbReference type="EMBL" id="AY085206">
    <property type="protein sequence ID" value="AAM61756.1"/>
    <property type="molecule type" value="mRNA"/>
</dbReference>
<dbReference type="RefSeq" id="NP_197149.1">
    <property type="nucleotide sequence ID" value="NM_121650.4"/>
</dbReference>
<dbReference type="RefSeq" id="NP_850830.1">
    <property type="nucleotide sequence ID" value="NM_180499.2"/>
</dbReference>
<dbReference type="SMR" id="Q9FFE0"/>
<dbReference type="FunCoup" id="Q9FFE0">
    <property type="interactions" value="161"/>
</dbReference>
<dbReference type="IntAct" id="Q9FFE0">
    <property type="interactions" value="1"/>
</dbReference>
<dbReference type="STRING" id="3702.Q9FFE0"/>
<dbReference type="iPTMnet" id="Q9FFE0"/>
<dbReference type="PaxDb" id="3702-AT5G16450.2"/>
<dbReference type="ProteomicsDB" id="228201"/>
<dbReference type="DNASU" id="831506"/>
<dbReference type="EnsemblPlants" id="AT5G16450.1">
    <property type="protein sequence ID" value="AT5G16450.1"/>
    <property type="gene ID" value="AT5G16450"/>
</dbReference>
<dbReference type="EnsemblPlants" id="AT5G16450.2">
    <property type="protein sequence ID" value="AT5G16450.2"/>
    <property type="gene ID" value="AT5G16450"/>
</dbReference>
<dbReference type="GeneID" id="831506"/>
<dbReference type="Gramene" id="AT5G16450.1">
    <property type="protein sequence ID" value="AT5G16450.1"/>
    <property type="gene ID" value="AT5G16450"/>
</dbReference>
<dbReference type="Gramene" id="AT5G16450.2">
    <property type="protein sequence ID" value="AT5G16450.2"/>
    <property type="gene ID" value="AT5G16450"/>
</dbReference>
<dbReference type="KEGG" id="ath:AT5G16450"/>
<dbReference type="Araport" id="AT5G16450"/>
<dbReference type="TAIR" id="AT5G16450"/>
<dbReference type="eggNOG" id="ENOG502S32I">
    <property type="taxonomic scope" value="Eukaryota"/>
</dbReference>
<dbReference type="HOGENOM" id="CLU_072626_4_1_1"/>
<dbReference type="InParanoid" id="Q9FFE0"/>
<dbReference type="OMA" id="RSCDTQF"/>
<dbReference type="OrthoDB" id="1476984at2759"/>
<dbReference type="PhylomeDB" id="Q9FFE0"/>
<dbReference type="PRO" id="PR:Q9FFE0"/>
<dbReference type="Proteomes" id="UP000006548">
    <property type="component" value="Chromosome 5"/>
</dbReference>
<dbReference type="ExpressionAtlas" id="Q9FFE0">
    <property type="expression patterns" value="baseline and differential"/>
</dbReference>
<dbReference type="GO" id="GO:0009536">
    <property type="term" value="C:plastid"/>
    <property type="evidence" value="ECO:0007005"/>
    <property type="project" value="TAIR"/>
</dbReference>
<dbReference type="GO" id="GO:0047443">
    <property type="term" value="F:4-hydroxy-4-methyl-2-oxoglutarate aldolase activity"/>
    <property type="evidence" value="ECO:0007669"/>
    <property type="project" value="UniProtKB-EC"/>
</dbReference>
<dbReference type="GO" id="GO:0046872">
    <property type="term" value="F:metal ion binding"/>
    <property type="evidence" value="ECO:0007669"/>
    <property type="project" value="UniProtKB-KW"/>
</dbReference>
<dbReference type="GO" id="GO:0008948">
    <property type="term" value="F:oxaloacetate decarboxylase activity"/>
    <property type="evidence" value="ECO:0007669"/>
    <property type="project" value="UniProtKB-EC"/>
</dbReference>
<dbReference type="GO" id="GO:0008428">
    <property type="term" value="F:ribonuclease inhibitor activity"/>
    <property type="evidence" value="ECO:0007669"/>
    <property type="project" value="InterPro"/>
</dbReference>
<dbReference type="GO" id="GO:0051252">
    <property type="term" value="P:regulation of RNA metabolic process"/>
    <property type="evidence" value="ECO:0007669"/>
    <property type="project" value="InterPro"/>
</dbReference>
<dbReference type="CDD" id="cd16841">
    <property type="entry name" value="RraA_family"/>
    <property type="match status" value="1"/>
</dbReference>
<dbReference type="Gene3D" id="3.50.30.40">
    <property type="entry name" value="Ribonuclease E inhibitor RraA/RraA-like"/>
    <property type="match status" value="1"/>
</dbReference>
<dbReference type="InterPro" id="IPR010203">
    <property type="entry name" value="RraA"/>
</dbReference>
<dbReference type="InterPro" id="IPR005493">
    <property type="entry name" value="RraA/RraA-like"/>
</dbReference>
<dbReference type="InterPro" id="IPR036704">
    <property type="entry name" value="RraA/RraA-like_sf"/>
</dbReference>
<dbReference type="NCBIfam" id="TIGR01935">
    <property type="entry name" value="NOT-MenG"/>
    <property type="match status" value="1"/>
</dbReference>
<dbReference type="NCBIfam" id="NF006875">
    <property type="entry name" value="PRK09372.1"/>
    <property type="match status" value="1"/>
</dbReference>
<dbReference type="PANTHER" id="PTHR33254:SF17">
    <property type="entry name" value="4-HYDROXY-4-METHYL-2-OXOGLUTARATE ALDOLASE 1-RELATED"/>
    <property type="match status" value="1"/>
</dbReference>
<dbReference type="PANTHER" id="PTHR33254">
    <property type="entry name" value="4-HYDROXY-4-METHYL-2-OXOGLUTARATE ALDOLASE 3-RELATED"/>
    <property type="match status" value="1"/>
</dbReference>
<dbReference type="Pfam" id="PF03737">
    <property type="entry name" value="RraA-like"/>
    <property type="match status" value="1"/>
</dbReference>
<dbReference type="SUPFAM" id="SSF89562">
    <property type="entry name" value="RraA-like"/>
    <property type="match status" value="1"/>
</dbReference>
<evidence type="ECO:0000250" key="1"/>
<evidence type="ECO:0000305" key="2"/>
<evidence type="ECO:0007744" key="3">
    <source>
    </source>
</evidence>
<organism>
    <name type="scientific">Arabidopsis thaliana</name>
    <name type="common">Mouse-ear cress</name>
    <dbReference type="NCBI Taxonomy" id="3702"/>
    <lineage>
        <taxon>Eukaryota</taxon>
        <taxon>Viridiplantae</taxon>
        <taxon>Streptophyta</taxon>
        <taxon>Embryophyta</taxon>
        <taxon>Tracheophyta</taxon>
        <taxon>Spermatophyta</taxon>
        <taxon>Magnoliopsida</taxon>
        <taxon>eudicotyledons</taxon>
        <taxon>Gunneridae</taxon>
        <taxon>Pentapetalae</taxon>
        <taxon>rosids</taxon>
        <taxon>malvids</taxon>
        <taxon>Brassicales</taxon>
        <taxon>Brassicaceae</taxon>
        <taxon>Camelineae</taxon>
        <taxon>Arabidopsis</taxon>
    </lineage>
</organism>
<sequence>MAFVTTAEVCDANQELIRSGQLRALQPIFQIYGRRQIFSGPVVTVKVFEDNGLIRQFIEEKGNGRVLVVDGGGSQRCAILGGNPVVQAQNNGWAGIVVNGCIRDVDEINGCDIGVRALASHPIKASKKGLGEQRVPVNIAGTRICDGEWLYADTDGILVSQIELSV</sequence>
<name>RRAA2_ARATH</name>
<gene>
    <name type="ordered locus">At5g16450</name>
    <name type="ORF">MQK4.18</name>
</gene>
<keyword id="KW-0007">Acetylation</keyword>
<keyword id="KW-0456">Lyase</keyword>
<keyword id="KW-0479">Metal-binding</keyword>
<keyword id="KW-1185">Reference proteome</keyword>
<protein>
    <recommendedName>
        <fullName>Putative 4-hydroxy-4-methyl-2-oxoglutarate aldolase 2</fullName>
        <shortName>HMG aldolase 2</shortName>
        <ecNumber>4.1.3.17</ecNumber>
    </recommendedName>
    <alternativeName>
        <fullName>Oxaloacetate decarboxylase</fullName>
        <shortName>OAA decarboxylase</shortName>
        <ecNumber>4.1.1.112</ecNumber>
    </alternativeName>
    <alternativeName>
        <fullName>Regulator of ribonuclease activity homolog 2</fullName>
    </alternativeName>
    <alternativeName>
        <fullName>RraA-like protein 2</fullName>
    </alternativeName>
</protein>
<accession>Q9FFE0</accession>
<accession>Q8LEV6</accession>
<comment type="function">
    <text evidence="1">Catalyzes the aldol cleavage of 4-hydroxy-4-methyl-2-oxoglutarate (HMG) into 2 molecules of pyruvate. Also contains a secondary oxaloacetate (OAA) decarboxylase activity due to the common pyruvate enolate transition state formed following C-C bond cleavage in the retro-aldol and decarboxylation reactions (By similarity).</text>
</comment>
<comment type="catalytic activity">
    <reaction>
        <text>4-hydroxy-4-methyl-2-oxoglutarate = 2 pyruvate</text>
        <dbReference type="Rhea" id="RHEA:22748"/>
        <dbReference type="ChEBI" id="CHEBI:15361"/>
        <dbReference type="ChEBI" id="CHEBI:58276"/>
        <dbReference type="EC" id="4.1.3.17"/>
    </reaction>
</comment>
<comment type="catalytic activity">
    <reaction>
        <text>oxaloacetate + H(+) = pyruvate + CO2</text>
        <dbReference type="Rhea" id="RHEA:15641"/>
        <dbReference type="ChEBI" id="CHEBI:15361"/>
        <dbReference type="ChEBI" id="CHEBI:15378"/>
        <dbReference type="ChEBI" id="CHEBI:16452"/>
        <dbReference type="ChEBI" id="CHEBI:16526"/>
        <dbReference type="EC" id="4.1.1.112"/>
    </reaction>
</comment>
<comment type="cofactor">
    <cofactor evidence="1">
        <name>a divalent metal cation</name>
        <dbReference type="ChEBI" id="CHEBI:60240"/>
    </cofactor>
    <text evidence="1">Divalent metal cation.</text>
</comment>
<comment type="subunit">
    <text evidence="1">Homotrimer.</text>
</comment>
<comment type="similarity">
    <text evidence="2">Belongs to the class II aldolase/RraA-like family.</text>
</comment>
<proteinExistence type="evidence at protein level"/>
<reference key="1">
    <citation type="journal article" date="1997" name="DNA Res.">
        <title>Structural analysis of Arabidopsis thaliana chromosome 5. I. Sequence features of the 1.6 Mb regions covered by twenty physically assigned P1 clones.</title>
        <authorList>
            <person name="Sato S."/>
            <person name="Kotani H."/>
            <person name="Nakamura Y."/>
            <person name="Kaneko T."/>
            <person name="Asamizu E."/>
            <person name="Fukami M."/>
            <person name="Miyajima N."/>
            <person name="Tabata S."/>
        </authorList>
    </citation>
    <scope>NUCLEOTIDE SEQUENCE [LARGE SCALE GENOMIC DNA]</scope>
    <source>
        <strain>cv. Columbia</strain>
    </source>
</reference>
<reference key="2">
    <citation type="journal article" date="2017" name="Plant J.">
        <title>Araport11: a complete reannotation of the Arabidopsis thaliana reference genome.</title>
        <authorList>
            <person name="Cheng C.Y."/>
            <person name="Krishnakumar V."/>
            <person name="Chan A.P."/>
            <person name="Thibaud-Nissen F."/>
            <person name="Schobel S."/>
            <person name="Town C.D."/>
        </authorList>
    </citation>
    <scope>GENOME REANNOTATION</scope>
    <source>
        <strain>cv. Columbia</strain>
    </source>
</reference>
<reference key="3">
    <citation type="journal article" date="2002" name="Science">
        <title>Functional annotation of a full-length Arabidopsis cDNA collection.</title>
        <authorList>
            <person name="Seki M."/>
            <person name="Narusaka M."/>
            <person name="Kamiya A."/>
            <person name="Ishida J."/>
            <person name="Satou M."/>
            <person name="Sakurai T."/>
            <person name="Nakajima M."/>
            <person name="Enju A."/>
            <person name="Akiyama K."/>
            <person name="Oono Y."/>
            <person name="Muramatsu M."/>
            <person name="Hayashizaki Y."/>
            <person name="Kawai J."/>
            <person name="Carninci P."/>
            <person name="Itoh M."/>
            <person name="Ishii Y."/>
            <person name="Arakawa T."/>
            <person name="Shibata K."/>
            <person name="Shinagawa A."/>
            <person name="Shinozaki K."/>
        </authorList>
    </citation>
    <scope>NUCLEOTIDE SEQUENCE [LARGE SCALE MRNA]</scope>
    <source>
        <strain>cv. Columbia</strain>
    </source>
</reference>
<reference key="4">
    <citation type="journal article" date="2003" name="Science">
        <title>Empirical analysis of transcriptional activity in the Arabidopsis genome.</title>
        <authorList>
            <person name="Yamada K."/>
            <person name="Lim J."/>
            <person name="Dale J.M."/>
            <person name="Chen H."/>
            <person name="Shinn P."/>
            <person name="Palm C.J."/>
            <person name="Southwick A.M."/>
            <person name="Wu H.C."/>
            <person name="Kim C.J."/>
            <person name="Nguyen M."/>
            <person name="Pham P.K."/>
            <person name="Cheuk R.F."/>
            <person name="Karlin-Newmann G."/>
            <person name="Liu S.X."/>
            <person name="Lam B."/>
            <person name="Sakano H."/>
            <person name="Wu T."/>
            <person name="Yu G."/>
            <person name="Miranda M."/>
            <person name="Quach H.L."/>
            <person name="Tripp M."/>
            <person name="Chang C.H."/>
            <person name="Lee J.M."/>
            <person name="Toriumi M.J."/>
            <person name="Chan M.M."/>
            <person name="Tang C.C."/>
            <person name="Onodera C.S."/>
            <person name="Deng J.M."/>
            <person name="Akiyama K."/>
            <person name="Ansari Y."/>
            <person name="Arakawa T."/>
            <person name="Banh J."/>
            <person name="Banno F."/>
            <person name="Bowser L."/>
            <person name="Brooks S.Y."/>
            <person name="Carninci P."/>
            <person name="Chao Q."/>
            <person name="Choy N."/>
            <person name="Enju A."/>
            <person name="Goldsmith A.D."/>
            <person name="Gurjal M."/>
            <person name="Hansen N.F."/>
            <person name="Hayashizaki Y."/>
            <person name="Johnson-Hopson C."/>
            <person name="Hsuan V.W."/>
            <person name="Iida K."/>
            <person name="Karnes M."/>
            <person name="Khan S."/>
            <person name="Koesema E."/>
            <person name="Ishida J."/>
            <person name="Jiang P.X."/>
            <person name="Jones T."/>
            <person name="Kawai J."/>
            <person name="Kamiya A."/>
            <person name="Meyers C."/>
            <person name="Nakajima M."/>
            <person name="Narusaka M."/>
            <person name="Seki M."/>
            <person name="Sakurai T."/>
            <person name="Satou M."/>
            <person name="Tamse R."/>
            <person name="Vaysberg M."/>
            <person name="Wallender E.K."/>
            <person name="Wong C."/>
            <person name="Yamamura Y."/>
            <person name="Yuan S."/>
            <person name="Shinozaki K."/>
            <person name="Davis R.W."/>
            <person name="Theologis A."/>
            <person name="Ecker J.R."/>
        </authorList>
    </citation>
    <scope>NUCLEOTIDE SEQUENCE [LARGE SCALE MRNA]</scope>
    <source>
        <strain>cv. Columbia</strain>
    </source>
</reference>
<reference key="5">
    <citation type="submission" date="2002-03" db="EMBL/GenBank/DDBJ databases">
        <title>Full-length cDNA from Arabidopsis thaliana.</title>
        <authorList>
            <person name="Brover V.V."/>
            <person name="Troukhan M.E."/>
            <person name="Alexandrov N.A."/>
            <person name="Lu Y.-P."/>
            <person name="Flavell R.B."/>
            <person name="Feldmann K.A."/>
        </authorList>
    </citation>
    <scope>NUCLEOTIDE SEQUENCE [LARGE SCALE MRNA]</scope>
</reference>
<reference key="6">
    <citation type="journal article" date="2012" name="Mol. Cell. Proteomics">
        <title>Comparative large-scale characterisation of plant vs. mammal proteins reveals similar and idiosyncratic N-alpha acetylation features.</title>
        <authorList>
            <person name="Bienvenut W.V."/>
            <person name="Sumpton D."/>
            <person name="Martinez A."/>
            <person name="Lilla S."/>
            <person name="Espagne C."/>
            <person name="Meinnel T."/>
            <person name="Giglione C."/>
        </authorList>
    </citation>
    <scope>ACETYLATION [LARGE SCALE ANALYSIS] AT ALA-2</scope>
    <scope>CLEAVAGE OF INITIATOR METHIONINE [LARGE SCALE ANALYSIS]</scope>
    <scope>IDENTIFICATION BY MASS SPECTROMETRY [LARGE SCALE ANALYSIS]</scope>
</reference>
<feature type="initiator methionine" description="Removed" evidence="3">
    <location>
        <position position="1"/>
    </location>
</feature>
<feature type="chain" id="PRO_0000209653" description="Putative 4-hydroxy-4-methyl-2-oxoglutarate aldolase 2">
    <location>
        <begin position="2"/>
        <end position="166"/>
    </location>
</feature>
<feature type="binding site" evidence="1">
    <location>
        <begin position="81"/>
        <end position="84"/>
    </location>
    <ligand>
        <name>substrate</name>
    </ligand>
</feature>
<feature type="binding site" evidence="1">
    <location>
        <position position="103"/>
    </location>
    <ligand>
        <name>substrate</name>
    </ligand>
</feature>
<feature type="binding site" evidence="1">
    <location>
        <position position="104"/>
    </location>
    <ligand>
        <name>a divalent metal cation</name>
        <dbReference type="ChEBI" id="CHEBI:60240"/>
    </ligand>
</feature>
<feature type="modified residue" description="N-acetylalanine" evidence="3">
    <location>
        <position position="2"/>
    </location>
</feature>
<feature type="sequence conflict" description="In Ref. 5; AAM61756." evidence="2" ref="5">
    <original>S</original>
    <variation>R</variation>
    <location>
        <position position="126"/>
    </location>
</feature>